<keyword id="KW-1185">Reference proteome</keyword>
<proteinExistence type="inferred from homology"/>
<protein>
    <recommendedName>
        <fullName evidence="1">Protein SlyX homolog</fullName>
    </recommendedName>
</protein>
<reference key="1">
    <citation type="journal article" date="2004" name="Proc. Natl. Acad. Sci. U.S.A.">
        <title>Genome sequence of the deep-sea gamma-proteobacterium Idiomarina loihiensis reveals amino acid fermentation as a source of carbon and energy.</title>
        <authorList>
            <person name="Hou S."/>
            <person name="Saw J.H."/>
            <person name="Lee K.S."/>
            <person name="Freitas T.A."/>
            <person name="Belisle C."/>
            <person name="Kawarabayasi Y."/>
            <person name="Donachie S.P."/>
            <person name="Pikina A."/>
            <person name="Galperin M.Y."/>
            <person name="Koonin E.V."/>
            <person name="Makarova K.S."/>
            <person name="Omelchenko M.V."/>
            <person name="Sorokin A."/>
            <person name="Wolf Y.I."/>
            <person name="Li Q.X."/>
            <person name="Keum Y.S."/>
            <person name="Campbell S."/>
            <person name="Denery J."/>
            <person name="Aizawa S."/>
            <person name="Shibata S."/>
            <person name="Malahoff A."/>
            <person name="Alam M."/>
        </authorList>
    </citation>
    <scope>NUCLEOTIDE SEQUENCE [LARGE SCALE GENOMIC DNA]</scope>
    <source>
        <strain>ATCC BAA-735 / DSM 15497 / L2-TR</strain>
    </source>
</reference>
<name>SLYX_IDILO</name>
<sequence>MTVEKIEAQLTNLEMQLTFQEDTIDSLNKLVTEQTQQMSEMQKQIRWLGKRLKQMQENQSTDSDPADEPPPPHY</sequence>
<feature type="chain" id="PRO_0000227067" description="Protein SlyX homolog">
    <location>
        <begin position="1"/>
        <end position="74"/>
    </location>
</feature>
<feature type="region of interest" description="Disordered" evidence="2">
    <location>
        <begin position="52"/>
        <end position="74"/>
    </location>
</feature>
<accession>Q5QVW5</accession>
<comment type="similarity">
    <text evidence="1">Belongs to the SlyX family.</text>
</comment>
<organism>
    <name type="scientific">Idiomarina loihiensis (strain ATCC BAA-735 / DSM 15497 / L2-TR)</name>
    <dbReference type="NCBI Taxonomy" id="283942"/>
    <lineage>
        <taxon>Bacteria</taxon>
        <taxon>Pseudomonadati</taxon>
        <taxon>Pseudomonadota</taxon>
        <taxon>Gammaproteobacteria</taxon>
        <taxon>Alteromonadales</taxon>
        <taxon>Idiomarinaceae</taxon>
        <taxon>Idiomarina</taxon>
    </lineage>
</organism>
<gene>
    <name evidence="1" type="primary">slyX</name>
    <name type="ordered locus">IL2311</name>
</gene>
<dbReference type="EMBL" id="AE017340">
    <property type="protein sequence ID" value="AAV83143.1"/>
    <property type="molecule type" value="Genomic_DNA"/>
</dbReference>
<dbReference type="RefSeq" id="WP_011235537.1">
    <property type="nucleotide sequence ID" value="NC_006512.1"/>
</dbReference>
<dbReference type="SMR" id="Q5QVW5"/>
<dbReference type="STRING" id="283942.IL2311"/>
<dbReference type="GeneID" id="41337507"/>
<dbReference type="KEGG" id="ilo:IL2311"/>
<dbReference type="eggNOG" id="COG2900">
    <property type="taxonomic scope" value="Bacteria"/>
</dbReference>
<dbReference type="HOGENOM" id="CLU_180796_4_0_6"/>
<dbReference type="OrthoDB" id="5771733at2"/>
<dbReference type="Proteomes" id="UP000001171">
    <property type="component" value="Chromosome"/>
</dbReference>
<dbReference type="Gene3D" id="1.20.5.300">
    <property type="match status" value="1"/>
</dbReference>
<dbReference type="HAMAP" id="MF_00715">
    <property type="entry name" value="SlyX"/>
    <property type="match status" value="1"/>
</dbReference>
<dbReference type="InterPro" id="IPR007236">
    <property type="entry name" value="SlyX"/>
</dbReference>
<dbReference type="PANTHER" id="PTHR36508">
    <property type="entry name" value="PROTEIN SLYX"/>
    <property type="match status" value="1"/>
</dbReference>
<dbReference type="PANTHER" id="PTHR36508:SF1">
    <property type="entry name" value="PROTEIN SLYX"/>
    <property type="match status" value="1"/>
</dbReference>
<dbReference type="Pfam" id="PF04102">
    <property type="entry name" value="SlyX"/>
    <property type="match status" value="1"/>
</dbReference>
<evidence type="ECO:0000255" key="1">
    <source>
        <dbReference type="HAMAP-Rule" id="MF_00715"/>
    </source>
</evidence>
<evidence type="ECO:0000256" key="2">
    <source>
        <dbReference type="SAM" id="MobiDB-lite"/>
    </source>
</evidence>